<dbReference type="EC" id="2.5.1.78" evidence="1"/>
<dbReference type="EMBL" id="CP001628">
    <property type="protein sequence ID" value="ACS30595.1"/>
    <property type="molecule type" value="Genomic_DNA"/>
</dbReference>
<dbReference type="RefSeq" id="WP_010078768.1">
    <property type="nucleotide sequence ID" value="NC_012803.1"/>
</dbReference>
<dbReference type="SMR" id="C5CBJ8"/>
<dbReference type="STRING" id="465515.Mlut_10880"/>
<dbReference type="EnsemblBacteria" id="ACS30595">
    <property type="protein sequence ID" value="ACS30595"/>
    <property type="gene ID" value="Mlut_10880"/>
</dbReference>
<dbReference type="GeneID" id="93345245"/>
<dbReference type="KEGG" id="mlu:Mlut_10880"/>
<dbReference type="PATRIC" id="fig|465515.4.peg.1031"/>
<dbReference type="eggNOG" id="COG0054">
    <property type="taxonomic scope" value="Bacteria"/>
</dbReference>
<dbReference type="HOGENOM" id="CLU_089358_1_2_11"/>
<dbReference type="UniPathway" id="UPA00275">
    <property type="reaction ID" value="UER00404"/>
</dbReference>
<dbReference type="Proteomes" id="UP000000738">
    <property type="component" value="Chromosome"/>
</dbReference>
<dbReference type="GO" id="GO:0005829">
    <property type="term" value="C:cytosol"/>
    <property type="evidence" value="ECO:0007669"/>
    <property type="project" value="TreeGrafter"/>
</dbReference>
<dbReference type="GO" id="GO:0009349">
    <property type="term" value="C:riboflavin synthase complex"/>
    <property type="evidence" value="ECO:0007669"/>
    <property type="project" value="InterPro"/>
</dbReference>
<dbReference type="GO" id="GO:0000906">
    <property type="term" value="F:6,7-dimethyl-8-ribityllumazine synthase activity"/>
    <property type="evidence" value="ECO:0007669"/>
    <property type="project" value="UniProtKB-UniRule"/>
</dbReference>
<dbReference type="GO" id="GO:0009231">
    <property type="term" value="P:riboflavin biosynthetic process"/>
    <property type="evidence" value="ECO:0007669"/>
    <property type="project" value="UniProtKB-UniRule"/>
</dbReference>
<dbReference type="CDD" id="cd09209">
    <property type="entry name" value="Lumazine_synthase-I"/>
    <property type="match status" value="1"/>
</dbReference>
<dbReference type="Gene3D" id="3.40.50.960">
    <property type="entry name" value="Lumazine/riboflavin synthase"/>
    <property type="match status" value="1"/>
</dbReference>
<dbReference type="HAMAP" id="MF_00178">
    <property type="entry name" value="Lumazine_synth"/>
    <property type="match status" value="1"/>
</dbReference>
<dbReference type="InterPro" id="IPR034964">
    <property type="entry name" value="LS"/>
</dbReference>
<dbReference type="InterPro" id="IPR002180">
    <property type="entry name" value="LS/RS"/>
</dbReference>
<dbReference type="InterPro" id="IPR036467">
    <property type="entry name" value="LS/RS_sf"/>
</dbReference>
<dbReference type="NCBIfam" id="TIGR00114">
    <property type="entry name" value="lumazine-synth"/>
    <property type="match status" value="1"/>
</dbReference>
<dbReference type="PANTHER" id="PTHR21058:SF0">
    <property type="entry name" value="6,7-DIMETHYL-8-RIBITYLLUMAZINE SYNTHASE"/>
    <property type="match status" value="1"/>
</dbReference>
<dbReference type="PANTHER" id="PTHR21058">
    <property type="entry name" value="6,7-DIMETHYL-8-RIBITYLLUMAZINE SYNTHASE DMRL SYNTHASE LUMAZINE SYNTHASE"/>
    <property type="match status" value="1"/>
</dbReference>
<dbReference type="Pfam" id="PF00885">
    <property type="entry name" value="DMRL_synthase"/>
    <property type="match status" value="1"/>
</dbReference>
<dbReference type="SUPFAM" id="SSF52121">
    <property type="entry name" value="Lumazine synthase"/>
    <property type="match status" value="1"/>
</dbReference>
<feature type="chain" id="PRO_1000203797" description="6,7-dimethyl-8-ribityllumazine synthase">
    <location>
        <begin position="1"/>
        <end position="158"/>
    </location>
</feature>
<feature type="active site" description="Proton donor" evidence="1">
    <location>
        <position position="89"/>
    </location>
</feature>
<feature type="binding site" evidence="1">
    <location>
        <position position="28"/>
    </location>
    <ligand>
        <name>5-amino-6-(D-ribitylamino)uracil</name>
        <dbReference type="ChEBI" id="CHEBI:15934"/>
    </ligand>
</feature>
<feature type="binding site" evidence="1">
    <location>
        <begin position="59"/>
        <end position="61"/>
    </location>
    <ligand>
        <name>5-amino-6-(D-ribitylamino)uracil</name>
        <dbReference type="ChEBI" id="CHEBI:15934"/>
    </ligand>
</feature>
<feature type="binding site" evidence="1">
    <location>
        <begin position="81"/>
        <end position="83"/>
    </location>
    <ligand>
        <name>5-amino-6-(D-ribitylamino)uracil</name>
        <dbReference type="ChEBI" id="CHEBI:15934"/>
    </ligand>
</feature>
<feature type="binding site" evidence="1">
    <location>
        <begin position="86"/>
        <end position="87"/>
    </location>
    <ligand>
        <name>(2S)-2-hydroxy-3-oxobutyl phosphate</name>
        <dbReference type="ChEBI" id="CHEBI:58830"/>
    </ligand>
</feature>
<feature type="binding site" evidence="1">
    <location>
        <position position="114"/>
    </location>
    <ligand>
        <name>5-amino-6-(D-ribitylamino)uracil</name>
        <dbReference type="ChEBI" id="CHEBI:15934"/>
    </ligand>
</feature>
<feature type="binding site" evidence="1">
    <location>
        <position position="128"/>
    </location>
    <ligand>
        <name>(2S)-2-hydroxy-3-oxobutyl phosphate</name>
        <dbReference type="ChEBI" id="CHEBI:58830"/>
    </ligand>
</feature>
<reference key="1">
    <citation type="journal article" date="2010" name="J. Bacteriol.">
        <title>Genome sequence of the Fleming strain of Micrococcus luteus, a simple free-living actinobacterium.</title>
        <authorList>
            <person name="Young M."/>
            <person name="Artsatbanov V."/>
            <person name="Beller H.R."/>
            <person name="Chandra G."/>
            <person name="Chater K.F."/>
            <person name="Dover L.G."/>
            <person name="Goh E.B."/>
            <person name="Kahan T."/>
            <person name="Kaprelyants A.S."/>
            <person name="Kyrpides N."/>
            <person name="Lapidus A."/>
            <person name="Lowry S.R."/>
            <person name="Lykidis A."/>
            <person name="Mahillon J."/>
            <person name="Markowitz V."/>
            <person name="Mavromatis K."/>
            <person name="Mukamolova G.V."/>
            <person name="Oren A."/>
            <person name="Rokem J.S."/>
            <person name="Smith M.C."/>
            <person name="Young D.I."/>
            <person name="Greenblatt C.L."/>
        </authorList>
    </citation>
    <scope>NUCLEOTIDE SEQUENCE [LARGE SCALE GENOMIC DNA]</scope>
    <source>
        <strain>ATCC 4698 / DSM 20030 / JCM 1464 / CCM 169 / CCUG 5858 / IAM 1056 / NBRC 3333 / NCIMB 9278 / NCTC 2665 / VKM Ac-2230</strain>
    </source>
</reference>
<accession>C5CBJ8</accession>
<proteinExistence type="inferred from homology"/>
<gene>
    <name evidence="1" type="primary">ribH</name>
    <name type="ordered locus">Mlut_10880</name>
</gene>
<keyword id="KW-1185">Reference proteome</keyword>
<keyword id="KW-0686">Riboflavin biosynthesis</keyword>
<keyword id="KW-0808">Transferase</keyword>
<comment type="function">
    <text evidence="1">Catalyzes the formation of 6,7-dimethyl-8-ribityllumazine by condensation of 5-amino-6-(D-ribitylamino)uracil with 3,4-dihydroxy-2-butanone 4-phosphate. This is the penultimate step in the biosynthesis of riboflavin.</text>
</comment>
<comment type="catalytic activity">
    <reaction evidence="1">
        <text>(2S)-2-hydroxy-3-oxobutyl phosphate + 5-amino-6-(D-ribitylamino)uracil = 6,7-dimethyl-8-(1-D-ribityl)lumazine + phosphate + 2 H2O + H(+)</text>
        <dbReference type="Rhea" id="RHEA:26152"/>
        <dbReference type="ChEBI" id="CHEBI:15377"/>
        <dbReference type="ChEBI" id="CHEBI:15378"/>
        <dbReference type="ChEBI" id="CHEBI:15934"/>
        <dbReference type="ChEBI" id="CHEBI:43474"/>
        <dbReference type="ChEBI" id="CHEBI:58201"/>
        <dbReference type="ChEBI" id="CHEBI:58830"/>
        <dbReference type="EC" id="2.5.1.78"/>
    </reaction>
</comment>
<comment type="pathway">
    <text evidence="1">Cofactor biosynthesis; riboflavin biosynthesis; riboflavin from 2-hydroxy-3-oxobutyl phosphate and 5-amino-6-(D-ribitylamino)uracil: step 1/2.</text>
</comment>
<comment type="similarity">
    <text evidence="1">Belongs to the DMRL synthase family.</text>
</comment>
<sequence>MSGAGAPTFTPDPAAASGLNVAIVAAQWHTEIMDGLIAGAQAAAADLGLEPVLVRVPGTVELTVAAARLAERFDVVVVLGVVVRGDTPHFDYVCQSVTQGVTEVSVRTGVPVGFGVLTVDTEQQARDRAGLPGSREDKGREALEAAVLTELALRRAGA</sequence>
<organism>
    <name type="scientific">Micrococcus luteus (strain ATCC 4698 / DSM 20030 / JCM 1464 / CCM 169 / CCUG 5858 / IAM 1056 / NBRC 3333 / NCIMB 9278 / NCTC 2665 / VKM Ac-2230)</name>
    <name type="common">Micrococcus lysodeikticus</name>
    <dbReference type="NCBI Taxonomy" id="465515"/>
    <lineage>
        <taxon>Bacteria</taxon>
        <taxon>Bacillati</taxon>
        <taxon>Actinomycetota</taxon>
        <taxon>Actinomycetes</taxon>
        <taxon>Micrococcales</taxon>
        <taxon>Micrococcaceae</taxon>
        <taxon>Micrococcus</taxon>
    </lineage>
</organism>
<evidence type="ECO:0000255" key="1">
    <source>
        <dbReference type="HAMAP-Rule" id="MF_00178"/>
    </source>
</evidence>
<name>RISB_MICLC</name>
<protein>
    <recommendedName>
        <fullName evidence="1">6,7-dimethyl-8-ribityllumazine synthase</fullName>
        <shortName evidence="1">DMRL synthase</shortName>
        <shortName evidence="1">LS</shortName>
        <shortName evidence="1">Lumazine synthase</shortName>
        <ecNumber evidence="1">2.5.1.78</ecNumber>
    </recommendedName>
</protein>